<evidence type="ECO:0000255" key="1">
    <source>
        <dbReference type="HAMAP-Rule" id="MF_00139"/>
    </source>
</evidence>
<evidence type="ECO:0000255" key="2">
    <source>
        <dbReference type="PROSITE-ProRule" id="PRU01202"/>
    </source>
</evidence>
<sequence length="538" mass="56197">MAVAAKNIPAPDLVPVRRALLSVFDKTGLIDFARALAAAGVELVSTGGTAKAIAEAGLAVRDVSELTGFPEIMDGRVKTLHPSVHGALLGVRDDPEHAAAMRKYGIEPIDLLVSNLYPFEEVRRSGADYAAIVENIDIGGPAMIRASAKNHAYVAIVTDPGDYASVLNALEMNIGSLSLDFRKKLAAKAFARTATYDAAISGWFAEALEIEHPTWRAFGGRLTEVMRYGENPHQSAGFYVNGDKRPGVATARQLQGKQLSYNNINDTDAAFELAGEFDPSRSAAVAIIKHANPCGVAEGTSLKSAYAKALACDPVSAFGGIVAVNRTLDAEAAEDIVKTFTEVIIAPDATDEAAAIVAAKKNLRLLVTGGLPDPRSPGTTVKSVAGGLLVQGRDNAVVDDLELKVVTKRAPTPAEMADLKFAFRVAKHVKSNAIVYAKDGATVGIGAGQMSRVDSSRIAARKALDAAEAAGMTEPLTTGSVVASDAFFPFADGLLAAVAAGATAVIQPGGSMNDKDVIAAADEHGIAMVFTGVRHFRH</sequence>
<reference key="1">
    <citation type="journal article" date="2000" name="DNA Res.">
        <title>Complete genome structure of the nitrogen-fixing symbiotic bacterium Mesorhizobium loti.</title>
        <authorList>
            <person name="Kaneko T."/>
            <person name="Nakamura Y."/>
            <person name="Sato S."/>
            <person name="Asamizu E."/>
            <person name="Kato T."/>
            <person name="Sasamoto S."/>
            <person name="Watanabe A."/>
            <person name="Idesawa K."/>
            <person name="Ishikawa A."/>
            <person name="Kawashima K."/>
            <person name="Kimura T."/>
            <person name="Kishida Y."/>
            <person name="Kiyokawa C."/>
            <person name="Kohara M."/>
            <person name="Matsumoto M."/>
            <person name="Matsuno A."/>
            <person name="Mochizuki Y."/>
            <person name="Nakayama S."/>
            <person name="Nakazaki N."/>
            <person name="Shimpo S."/>
            <person name="Sugimoto M."/>
            <person name="Takeuchi C."/>
            <person name="Yamada M."/>
            <person name="Tabata S."/>
        </authorList>
    </citation>
    <scope>NUCLEOTIDE SEQUENCE [LARGE SCALE GENOMIC DNA]</scope>
    <source>
        <strain>LMG 29417 / CECT 9101 / MAFF 303099</strain>
    </source>
</reference>
<keyword id="KW-0378">Hydrolase</keyword>
<keyword id="KW-0511">Multifunctional enzyme</keyword>
<keyword id="KW-0658">Purine biosynthesis</keyword>
<keyword id="KW-0808">Transferase</keyword>
<accession>Q98ES7</accession>
<gene>
    <name evidence="1" type="primary">purH</name>
    <name type="ordered locus">mlr4101</name>
</gene>
<name>PUR9_RHILO</name>
<organism>
    <name type="scientific">Mesorhizobium japonicum (strain LMG 29417 / CECT 9101 / MAFF 303099)</name>
    <name type="common">Mesorhizobium loti (strain MAFF 303099)</name>
    <dbReference type="NCBI Taxonomy" id="266835"/>
    <lineage>
        <taxon>Bacteria</taxon>
        <taxon>Pseudomonadati</taxon>
        <taxon>Pseudomonadota</taxon>
        <taxon>Alphaproteobacteria</taxon>
        <taxon>Hyphomicrobiales</taxon>
        <taxon>Phyllobacteriaceae</taxon>
        <taxon>Mesorhizobium</taxon>
    </lineage>
</organism>
<feature type="chain" id="PRO_0000192116" description="Bifunctional purine biosynthesis protein PurH">
    <location>
        <begin position="1"/>
        <end position="538"/>
    </location>
</feature>
<feature type="domain" description="MGS-like" evidence="2">
    <location>
        <begin position="8"/>
        <end position="158"/>
    </location>
</feature>
<protein>
    <recommendedName>
        <fullName evidence="1">Bifunctional purine biosynthesis protein PurH</fullName>
    </recommendedName>
    <domain>
        <recommendedName>
            <fullName evidence="1">Phosphoribosylaminoimidazolecarboxamide formyltransferase</fullName>
            <ecNumber evidence="1">2.1.2.3</ecNumber>
        </recommendedName>
        <alternativeName>
            <fullName evidence="1">AICAR transformylase</fullName>
        </alternativeName>
    </domain>
    <domain>
        <recommendedName>
            <fullName evidence="1">IMP cyclohydrolase</fullName>
            <ecNumber evidence="1">3.5.4.10</ecNumber>
        </recommendedName>
        <alternativeName>
            <fullName evidence="1">ATIC</fullName>
        </alternativeName>
        <alternativeName>
            <fullName evidence="1">IMP synthase</fullName>
        </alternativeName>
        <alternativeName>
            <fullName evidence="1">Inosinicase</fullName>
        </alternativeName>
    </domain>
</protein>
<proteinExistence type="inferred from homology"/>
<dbReference type="EC" id="2.1.2.3" evidence="1"/>
<dbReference type="EC" id="3.5.4.10" evidence="1"/>
<dbReference type="EMBL" id="BA000012">
    <property type="protein sequence ID" value="BAB50840.1"/>
    <property type="molecule type" value="Genomic_DNA"/>
</dbReference>
<dbReference type="RefSeq" id="WP_010912183.1">
    <property type="nucleotide sequence ID" value="NC_002678.2"/>
</dbReference>
<dbReference type="SMR" id="Q98ES7"/>
<dbReference type="KEGG" id="mlo:mlr4101"/>
<dbReference type="PATRIC" id="fig|266835.9.peg.3244"/>
<dbReference type="eggNOG" id="COG0138">
    <property type="taxonomic scope" value="Bacteria"/>
</dbReference>
<dbReference type="HOGENOM" id="CLU_016316_5_2_5"/>
<dbReference type="UniPathway" id="UPA00074">
    <property type="reaction ID" value="UER00133"/>
</dbReference>
<dbReference type="UniPathway" id="UPA00074">
    <property type="reaction ID" value="UER00135"/>
</dbReference>
<dbReference type="Proteomes" id="UP000000552">
    <property type="component" value="Chromosome"/>
</dbReference>
<dbReference type="GO" id="GO:0005829">
    <property type="term" value="C:cytosol"/>
    <property type="evidence" value="ECO:0007669"/>
    <property type="project" value="TreeGrafter"/>
</dbReference>
<dbReference type="GO" id="GO:0003937">
    <property type="term" value="F:IMP cyclohydrolase activity"/>
    <property type="evidence" value="ECO:0007669"/>
    <property type="project" value="UniProtKB-UniRule"/>
</dbReference>
<dbReference type="GO" id="GO:0004643">
    <property type="term" value="F:phosphoribosylaminoimidazolecarboxamide formyltransferase activity"/>
    <property type="evidence" value="ECO:0007669"/>
    <property type="project" value="UniProtKB-UniRule"/>
</dbReference>
<dbReference type="GO" id="GO:0006189">
    <property type="term" value="P:'de novo' IMP biosynthetic process"/>
    <property type="evidence" value="ECO:0007669"/>
    <property type="project" value="UniProtKB-UniRule"/>
</dbReference>
<dbReference type="CDD" id="cd01421">
    <property type="entry name" value="IMPCH"/>
    <property type="match status" value="1"/>
</dbReference>
<dbReference type="FunFam" id="3.40.140.20:FF:000001">
    <property type="entry name" value="Bifunctional purine biosynthesis protein PurH"/>
    <property type="match status" value="1"/>
</dbReference>
<dbReference type="FunFam" id="3.40.50.1380:FF:000001">
    <property type="entry name" value="Bifunctional purine biosynthesis protein PurH"/>
    <property type="match status" value="1"/>
</dbReference>
<dbReference type="Gene3D" id="3.40.140.20">
    <property type="match status" value="2"/>
</dbReference>
<dbReference type="Gene3D" id="3.40.50.1380">
    <property type="entry name" value="Methylglyoxal synthase-like domain"/>
    <property type="match status" value="1"/>
</dbReference>
<dbReference type="HAMAP" id="MF_00139">
    <property type="entry name" value="PurH"/>
    <property type="match status" value="1"/>
</dbReference>
<dbReference type="InterPro" id="IPR024051">
    <property type="entry name" value="AICAR_Tfase_dup_dom_sf"/>
</dbReference>
<dbReference type="InterPro" id="IPR016193">
    <property type="entry name" value="Cytidine_deaminase-like"/>
</dbReference>
<dbReference type="InterPro" id="IPR011607">
    <property type="entry name" value="MGS-like_dom"/>
</dbReference>
<dbReference type="InterPro" id="IPR036914">
    <property type="entry name" value="MGS-like_dom_sf"/>
</dbReference>
<dbReference type="InterPro" id="IPR002695">
    <property type="entry name" value="PurH-like"/>
</dbReference>
<dbReference type="NCBIfam" id="NF002049">
    <property type="entry name" value="PRK00881.1"/>
    <property type="match status" value="1"/>
</dbReference>
<dbReference type="NCBIfam" id="TIGR00355">
    <property type="entry name" value="purH"/>
    <property type="match status" value="1"/>
</dbReference>
<dbReference type="PANTHER" id="PTHR11692:SF0">
    <property type="entry name" value="BIFUNCTIONAL PURINE BIOSYNTHESIS PROTEIN ATIC"/>
    <property type="match status" value="1"/>
</dbReference>
<dbReference type="PANTHER" id="PTHR11692">
    <property type="entry name" value="BIFUNCTIONAL PURINE BIOSYNTHESIS PROTEIN PURH"/>
    <property type="match status" value="1"/>
</dbReference>
<dbReference type="Pfam" id="PF01808">
    <property type="entry name" value="AICARFT_IMPCHas"/>
    <property type="match status" value="1"/>
</dbReference>
<dbReference type="Pfam" id="PF02142">
    <property type="entry name" value="MGS"/>
    <property type="match status" value="1"/>
</dbReference>
<dbReference type="PIRSF" id="PIRSF000414">
    <property type="entry name" value="AICARFT_IMPCHas"/>
    <property type="match status" value="1"/>
</dbReference>
<dbReference type="SMART" id="SM00798">
    <property type="entry name" value="AICARFT_IMPCHas"/>
    <property type="match status" value="1"/>
</dbReference>
<dbReference type="SMART" id="SM00851">
    <property type="entry name" value="MGS"/>
    <property type="match status" value="1"/>
</dbReference>
<dbReference type="SUPFAM" id="SSF53927">
    <property type="entry name" value="Cytidine deaminase-like"/>
    <property type="match status" value="1"/>
</dbReference>
<dbReference type="SUPFAM" id="SSF52335">
    <property type="entry name" value="Methylglyoxal synthase-like"/>
    <property type="match status" value="1"/>
</dbReference>
<dbReference type="PROSITE" id="PS51855">
    <property type="entry name" value="MGS"/>
    <property type="match status" value="1"/>
</dbReference>
<comment type="catalytic activity">
    <reaction evidence="1">
        <text>(6R)-10-formyltetrahydrofolate + 5-amino-1-(5-phospho-beta-D-ribosyl)imidazole-4-carboxamide = 5-formamido-1-(5-phospho-D-ribosyl)imidazole-4-carboxamide + (6S)-5,6,7,8-tetrahydrofolate</text>
        <dbReference type="Rhea" id="RHEA:22192"/>
        <dbReference type="ChEBI" id="CHEBI:57453"/>
        <dbReference type="ChEBI" id="CHEBI:58467"/>
        <dbReference type="ChEBI" id="CHEBI:58475"/>
        <dbReference type="ChEBI" id="CHEBI:195366"/>
        <dbReference type="EC" id="2.1.2.3"/>
    </reaction>
</comment>
<comment type="catalytic activity">
    <reaction evidence="1">
        <text>IMP + H2O = 5-formamido-1-(5-phospho-D-ribosyl)imidazole-4-carboxamide</text>
        <dbReference type="Rhea" id="RHEA:18445"/>
        <dbReference type="ChEBI" id="CHEBI:15377"/>
        <dbReference type="ChEBI" id="CHEBI:58053"/>
        <dbReference type="ChEBI" id="CHEBI:58467"/>
        <dbReference type="EC" id="3.5.4.10"/>
    </reaction>
</comment>
<comment type="pathway">
    <text evidence="1">Purine metabolism; IMP biosynthesis via de novo pathway; 5-formamido-1-(5-phospho-D-ribosyl)imidazole-4-carboxamide from 5-amino-1-(5-phospho-D-ribosyl)imidazole-4-carboxamide (10-formyl THF route): step 1/1.</text>
</comment>
<comment type="pathway">
    <text evidence="1">Purine metabolism; IMP biosynthesis via de novo pathway; IMP from 5-formamido-1-(5-phospho-D-ribosyl)imidazole-4-carboxamide: step 1/1.</text>
</comment>
<comment type="domain">
    <text evidence="1">The IMP cyclohydrolase activity resides in the N-terminal region.</text>
</comment>
<comment type="similarity">
    <text evidence="1">Belongs to the PurH family.</text>
</comment>